<accession>P50601</accession>
<feature type="signal peptide" evidence="1">
    <location>
        <begin position="1"/>
        <end position="21"/>
    </location>
</feature>
<feature type="chain" id="PRO_0000034672" description="Tol-Pal system protein TolB" evidence="1">
    <location>
        <begin position="22"/>
        <end position="432"/>
    </location>
</feature>
<feature type="strand" evidence="3">
    <location>
        <begin position="25"/>
        <end position="27"/>
    </location>
</feature>
<evidence type="ECO:0000255" key="1">
    <source>
        <dbReference type="HAMAP-Rule" id="MF_00671"/>
    </source>
</evidence>
<evidence type="ECO:0000305" key="2"/>
<evidence type="ECO:0007829" key="3">
    <source>
        <dbReference type="PDB" id="6S3W"/>
    </source>
</evidence>
<gene>
    <name evidence="1" type="primary">tolB</name>
    <name type="ordered locus">PA0972</name>
</gene>
<reference key="1">
    <citation type="journal article" date="2000" name="Nature">
        <title>Complete genome sequence of Pseudomonas aeruginosa PAO1, an opportunistic pathogen.</title>
        <authorList>
            <person name="Stover C.K."/>
            <person name="Pham X.-Q.T."/>
            <person name="Erwin A.L."/>
            <person name="Mizoguchi S.D."/>
            <person name="Warrener P."/>
            <person name="Hickey M.J."/>
            <person name="Brinkman F.S.L."/>
            <person name="Hufnagle W.O."/>
            <person name="Kowalik D.J."/>
            <person name="Lagrou M."/>
            <person name="Garber R.L."/>
            <person name="Goltry L."/>
            <person name="Tolentino E."/>
            <person name="Westbrock-Wadman S."/>
            <person name="Yuan Y."/>
            <person name="Brody L.L."/>
            <person name="Coulter S.N."/>
            <person name="Folger K.R."/>
            <person name="Kas A."/>
            <person name="Larbig K."/>
            <person name="Lim R.M."/>
            <person name="Smith K.A."/>
            <person name="Spencer D.H."/>
            <person name="Wong G.K.-S."/>
            <person name="Wu Z."/>
            <person name="Paulsen I.T."/>
            <person name="Reizer J."/>
            <person name="Saier M.H. Jr."/>
            <person name="Hancock R.E.W."/>
            <person name="Lory S."/>
            <person name="Olson M.V."/>
        </authorList>
    </citation>
    <scope>NUCLEOTIDE SEQUENCE [LARGE SCALE GENOMIC DNA]</scope>
    <source>
        <strain>ATCC 15692 / DSM 22644 / CIP 104116 / JCM 14847 / LMG 12228 / 1C / PRS 101 / PAO1</strain>
    </source>
</reference>
<reference key="2">
    <citation type="journal article" date="2000" name="J. Bacteriol.">
        <title>RegA, iron, and growth phase regulate expression of the Pseudomonas aeruginosa tol-oprL gene cluster.</title>
        <authorList>
            <person name="Duan K."/>
            <person name="Lafontaine E.R."/>
            <person name="Majumdar S."/>
            <person name="Sokol P.A."/>
        </authorList>
    </citation>
    <scope>NUCLEOTIDE SEQUENCE [GENOMIC DNA]</scope>
    <source>
        <strain>PAO</strain>
    </source>
</reference>
<reference key="3">
    <citation type="journal article" date="1996" name="J. Bacteriol.">
        <title>Identification and characterization of the tolQRA genes of Pseudomonas aeruginosa.</title>
        <authorList>
            <person name="Dennis J.J."/>
            <person name="Lafontaine E.R."/>
            <person name="Sokol P.A."/>
        </authorList>
    </citation>
    <scope>NUCLEOTIDE SEQUENCE [GENOMIC DNA] OF 1-112</scope>
    <source>
        <strain>PAO</strain>
    </source>
</reference>
<protein>
    <recommendedName>
        <fullName evidence="1">Tol-Pal system protein TolB</fullName>
    </recommendedName>
</protein>
<comment type="function">
    <text evidence="1">Part of the Tol-Pal system, which plays a role in outer membrane invagination during cell division and is important for maintaining outer membrane integrity.</text>
</comment>
<comment type="subunit">
    <text evidence="1">The Tol-Pal system is composed of five core proteins: the inner membrane proteins TolA, TolQ and TolR, the periplasmic protein TolB and the outer membrane protein Pal. They form a network linking the inner and outer membranes and the peptidoglycan layer.</text>
</comment>
<comment type="subcellular location">
    <subcellularLocation>
        <location evidence="1 2">Periplasm</location>
    </subcellularLocation>
</comment>
<comment type="similarity">
    <text evidence="1 2">Belongs to the TolB family.</text>
</comment>
<dbReference type="EMBL" id="AE004091">
    <property type="protein sequence ID" value="AAG04361.1"/>
    <property type="molecule type" value="Genomic_DNA"/>
</dbReference>
<dbReference type="EMBL" id="U39558">
    <property type="protein sequence ID" value="AAC44661.2"/>
    <property type="molecule type" value="Genomic_DNA"/>
</dbReference>
<dbReference type="PIR" id="F83525">
    <property type="entry name" value="F83525"/>
</dbReference>
<dbReference type="RefSeq" id="NP_249663.1">
    <property type="nucleotide sequence ID" value="NC_002516.2"/>
</dbReference>
<dbReference type="RefSeq" id="WP_003112572.1">
    <property type="nucleotide sequence ID" value="NZ_QZGE01000007.1"/>
</dbReference>
<dbReference type="PDB" id="6S3W">
    <property type="method" value="NMR"/>
    <property type="chains" value="B=22-34"/>
</dbReference>
<dbReference type="PDBsum" id="6S3W"/>
<dbReference type="BMRB" id="P50601"/>
<dbReference type="SMR" id="P50601"/>
<dbReference type="FunCoup" id="P50601">
    <property type="interactions" value="68"/>
</dbReference>
<dbReference type="STRING" id="208964.PA0972"/>
<dbReference type="PaxDb" id="208964-PA0972"/>
<dbReference type="GeneID" id="881864"/>
<dbReference type="KEGG" id="pae:PA0972"/>
<dbReference type="PATRIC" id="fig|208964.12.peg.1010"/>
<dbReference type="PseudoCAP" id="PA0972"/>
<dbReference type="HOGENOM" id="CLU_047123_0_0_6"/>
<dbReference type="InParanoid" id="P50601"/>
<dbReference type="OrthoDB" id="9802240at2"/>
<dbReference type="PhylomeDB" id="P50601"/>
<dbReference type="BioCyc" id="PAER208964:G1FZ6-993-MONOMER"/>
<dbReference type="PHI-base" id="PHI:3137"/>
<dbReference type="Proteomes" id="UP000002438">
    <property type="component" value="Chromosome"/>
</dbReference>
<dbReference type="GO" id="GO:0042597">
    <property type="term" value="C:periplasmic space"/>
    <property type="evidence" value="ECO:0007669"/>
    <property type="project" value="UniProtKB-SubCell"/>
</dbReference>
<dbReference type="GO" id="GO:0051301">
    <property type="term" value="P:cell division"/>
    <property type="evidence" value="ECO:0007669"/>
    <property type="project" value="UniProtKB-UniRule"/>
</dbReference>
<dbReference type="GO" id="GO:0017038">
    <property type="term" value="P:protein import"/>
    <property type="evidence" value="ECO:0007669"/>
    <property type="project" value="InterPro"/>
</dbReference>
<dbReference type="Gene3D" id="2.120.10.30">
    <property type="entry name" value="TolB, C-terminal domain"/>
    <property type="match status" value="1"/>
</dbReference>
<dbReference type="Gene3D" id="3.40.50.10070">
    <property type="entry name" value="TolB, N-terminal domain"/>
    <property type="match status" value="1"/>
</dbReference>
<dbReference type="HAMAP" id="MF_00671">
    <property type="entry name" value="TolB"/>
    <property type="match status" value="1"/>
</dbReference>
<dbReference type="InterPro" id="IPR011042">
    <property type="entry name" value="6-blade_b-propeller_TolB-like"/>
</dbReference>
<dbReference type="InterPro" id="IPR011659">
    <property type="entry name" value="PD40"/>
</dbReference>
<dbReference type="InterPro" id="IPR014167">
    <property type="entry name" value="Tol-Pal_TolB"/>
</dbReference>
<dbReference type="InterPro" id="IPR007195">
    <property type="entry name" value="TolB_N"/>
</dbReference>
<dbReference type="NCBIfam" id="TIGR02800">
    <property type="entry name" value="propeller_TolB"/>
    <property type="match status" value="1"/>
</dbReference>
<dbReference type="PANTHER" id="PTHR36842:SF1">
    <property type="entry name" value="PROTEIN TOLB"/>
    <property type="match status" value="1"/>
</dbReference>
<dbReference type="PANTHER" id="PTHR36842">
    <property type="entry name" value="PROTEIN TOLB HOMOLOG"/>
    <property type="match status" value="1"/>
</dbReference>
<dbReference type="Pfam" id="PF07676">
    <property type="entry name" value="PD40"/>
    <property type="match status" value="4"/>
</dbReference>
<dbReference type="Pfam" id="PF04052">
    <property type="entry name" value="TolB_N"/>
    <property type="match status" value="1"/>
</dbReference>
<dbReference type="SUPFAM" id="SSF52964">
    <property type="entry name" value="TolB, N-terminal domain"/>
    <property type="match status" value="1"/>
</dbReference>
<dbReference type="SUPFAM" id="SSF69304">
    <property type="entry name" value="Tricorn protease N-terminal domain"/>
    <property type="match status" value="1"/>
</dbReference>
<keyword id="KW-0002">3D-structure</keyword>
<keyword id="KW-0131">Cell cycle</keyword>
<keyword id="KW-0132">Cell division</keyword>
<keyword id="KW-0574">Periplasm</keyword>
<keyword id="KW-1185">Reference proteome</keyword>
<keyword id="KW-0732">Signal</keyword>
<organism>
    <name type="scientific">Pseudomonas aeruginosa (strain ATCC 15692 / DSM 22644 / CIP 104116 / JCM 14847 / LMG 12228 / 1C / PRS 101 / PAO1)</name>
    <dbReference type="NCBI Taxonomy" id="208964"/>
    <lineage>
        <taxon>Bacteria</taxon>
        <taxon>Pseudomonadati</taxon>
        <taxon>Pseudomonadota</taxon>
        <taxon>Gammaproteobacteria</taxon>
        <taxon>Pseudomonadales</taxon>
        <taxon>Pseudomonadaceae</taxon>
        <taxon>Pseudomonas</taxon>
    </lineage>
</organism>
<sequence>MSTLIRIALFALALMAGAAQAADPLVISSGNDRAIPIAVVPFGFQGGNVLPEDMSNIIGNDLRNSGYFEPLPRQNMISQPAQASEVIFRDWKAVGVNYVMVGNIVPAGGRLQVQYALFDVGTEQQVLTGSVTGSTDQLRDMSHYIADQSFEKLTGIKGAFSTKMLYVTAERFSVDNTRYTLQRSDYDGARPVTLLQSREPIVSPRFSPDGRRIAYVSFEQKRPRIFIQYVDTGRREQITNFEGLNGAPAFSPDGNRLAFVLSRDGNPEIYVMDLGSRALRRLTNNLAIDTEPFWGKDGSTLYFTSDRGGKPQIYKMNVNSGAVDRVTFIGNYNANPKLSADEKTLVMVHRQQGYTNFQIAAQDLQRGNLRVLSNTTLDDSPTVAPNGTMLIYATRQQDRGVLMLVSINGRVRIPLPTAQGDVREPSWSPYLN</sequence>
<proteinExistence type="evidence at protein level"/>
<name>TOLB_PSEAE</name>